<protein>
    <recommendedName>
        <fullName>Carboxypeptidase Y homolog A</fullName>
        <ecNumber>3.4.16.5</ecNumber>
    </recommendedName>
</protein>
<name>CBPYA_ASPOR</name>
<keyword id="KW-0121">Carboxypeptidase</keyword>
<keyword id="KW-1015">Disulfide bond</keyword>
<keyword id="KW-0325">Glycoprotein</keyword>
<keyword id="KW-0378">Hydrolase</keyword>
<keyword id="KW-0645">Protease</keyword>
<keyword id="KW-1185">Reference proteome</keyword>
<keyword id="KW-0732">Signal</keyword>
<keyword id="KW-0926">Vacuole</keyword>
<keyword id="KW-0865">Zymogen</keyword>
<evidence type="ECO:0000250" key="1"/>
<evidence type="ECO:0000255" key="2"/>
<evidence type="ECO:0000255" key="3">
    <source>
        <dbReference type="PROSITE-ProRule" id="PRU10074"/>
    </source>
</evidence>
<evidence type="ECO:0000269" key="4">
    <source>
    </source>
</evidence>
<evidence type="ECO:0000269" key="5">
    <source>
    </source>
</evidence>
<evidence type="ECO:0000269" key="6">
    <source>
    </source>
</evidence>
<evidence type="ECO:0000305" key="7"/>
<dbReference type="EC" id="3.4.16.5"/>
<dbReference type="EMBL" id="BA000056">
    <property type="protein sequence ID" value="BAE65772.1"/>
    <property type="molecule type" value="Genomic_DNA"/>
</dbReference>
<dbReference type="RefSeq" id="XP_001826905.1">
    <property type="nucleotide sequence ID" value="XM_001826853.2"/>
</dbReference>
<dbReference type="SMR" id="Q2TYA1"/>
<dbReference type="STRING" id="510516.Q2TYA1"/>
<dbReference type="ESTHER" id="aspor-q2tya1">
    <property type="family name" value="Carboxypeptidase_S10"/>
</dbReference>
<dbReference type="MEROPS" id="S10.001"/>
<dbReference type="GlyCosmos" id="Q2TYA1">
    <property type="glycosylation" value="2 sites, No reported glycans"/>
</dbReference>
<dbReference type="EnsemblFungi" id="BAE65772">
    <property type="protein sequence ID" value="BAE65772"/>
    <property type="gene ID" value="AO090103000332"/>
</dbReference>
<dbReference type="GeneID" id="5999027"/>
<dbReference type="KEGG" id="aor:AO090103000332"/>
<dbReference type="VEuPathDB" id="FungiDB:AO090103000332"/>
<dbReference type="HOGENOM" id="CLU_008523_10_4_1"/>
<dbReference type="OMA" id="GDWMKPF"/>
<dbReference type="OrthoDB" id="5381at5052"/>
<dbReference type="Proteomes" id="UP000006564">
    <property type="component" value="Chromosome 8"/>
</dbReference>
<dbReference type="GO" id="GO:0000328">
    <property type="term" value="C:fungal-type vacuole lumen"/>
    <property type="evidence" value="ECO:0000314"/>
    <property type="project" value="UniProtKB"/>
</dbReference>
<dbReference type="GO" id="GO:0004185">
    <property type="term" value="F:serine-type carboxypeptidase activity"/>
    <property type="evidence" value="ECO:0007669"/>
    <property type="project" value="UniProtKB-EC"/>
</dbReference>
<dbReference type="GO" id="GO:0006508">
    <property type="term" value="P:proteolysis"/>
    <property type="evidence" value="ECO:0007669"/>
    <property type="project" value="UniProtKB-KW"/>
</dbReference>
<dbReference type="FunFam" id="1.10.287.410:FF:000001">
    <property type="entry name" value="Carboxypeptidase Y"/>
    <property type="match status" value="1"/>
</dbReference>
<dbReference type="Gene3D" id="1.10.287.410">
    <property type="match status" value="1"/>
</dbReference>
<dbReference type="Gene3D" id="3.40.50.1820">
    <property type="entry name" value="alpha/beta hydrolase"/>
    <property type="match status" value="1"/>
</dbReference>
<dbReference type="InterPro" id="IPR029058">
    <property type="entry name" value="AB_hydrolase_fold"/>
</dbReference>
<dbReference type="InterPro" id="IPR001563">
    <property type="entry name" value="Peptidase_S10"/>
</dbReference>
<dbReference type="InterPro" id="IPR008442">
    <property type="entry name" value="Propeptide_carboxypepY"/>
</dbReference>
<dbReference type="InterPro" id="IPR018202">
    <property type="entry name" value="Ser_caboxypep_ser_AS"/>
</dbReference>
<dbReference type="PANTHER" id="PTHR11802:SF113">
    <property type="entry name" value="SERINE CARBOXYPEPTIDASE CTSA-4.1"/>
    <property type="match status" value="1"/>
</dbReference>
<dbReference type="PANTHER" id="PTHR11802">
    <property type="entry name" value="SERINE PROTEASE FAMILY S10 SERINE CARBOXYPEPTIDASE"/>
    <property type="match status" value="1"/>
</dbReference>
<dbReference type="Pfam" id="PF05388">
    <property type="entry name" value="Carbpep_Y_N"/>
    <property type="match status" value="1"/>
</dbReference>
<dbReference type="Pfam" id="PF00450">
    <property type="entry name" value="Peptidase_S10"/>
    <property type="match status" value="1"/>
</dbReference>
<dbReference type="PRINTS" id="PR00724">
    <property type="entry name" value="CRBOXYPTASEC"/>
</dbReference>
<dbReference type="SUPFAM" id="SSF53474">
    <property type="entry name" value="alpha/beta-Hydrolases"/>
    <property type="match status" value="1"/>
</dbReference>
<dbReference type="PROSITE" id="PS00131">
    <property type="entry name" value="CARBOXYPEPT_SER_SER"/>
    <property type="match status" value="1"/>
</dbReference>
<organism>
    <name type="scientific">Aspergillus oryzae (strain ATCC 42149 / RIB 40)</name>
    <name type="common">Yellow koji mold</name>
    <dbReference type="NCBI Taxonomy" id="510516"/>
    <lineage>
        <taxon>Eukaryota</taxon>
        <taxon>Fungi</taxon>
        <taxon>Dikarya</taxon>
        <taxon>Ascomycota</taxon>
        <taxon>Pezizomycotina</taxon>
        <taxon>Eurotiomycetes</taxon>
        <taxon>Eurotiomycetidae</taxon>
        <taxon>Eurotiales</taxon>
        <taxon>Aspergillaceae</taxon>
        <taxon>Aspergillus</taxon>
        <taxon>Aspergillus subgen. Circumdati</taxon>
    </lineage>
</organism>
<reference key="1">
    <citation type="journal article" date="2005" name="Nature">
        <title>Genome sequencing and analysis of Aspergillus oryzae.</title>
        <authorList>
            <person name="Machida M."/>
            <person name="Asai K."/>
            <person name="Sano M."/>
            <person name="Tanaka T."/>
            <person name="Kumagai T."/>
            <person name="Terai G."/>
            <person name="Kusumoto K."/>
            <person name="Arima T."/>
            <person name="Akita O."/>
            <person name="Kashiwagi Y."/>
            <person name="Abe K."/>
            <person name="Gomi K."/>
            <person name="Horiuchi H."/>
            <person name="Kitamoto K."/>
            <person name="Kobayashi T."/>
            <person name="Takeuchi M."/>
            <person name="Denning D.W."/>
            <person name="Galagan J.E."/>
            <person name="Nierman W.C."/>
            <person name="Yu J."/>
            <person name="Archer D.B."/>
            <person name="Bennett J.W."/>
            <person name="Bhatnagar D."/>
            <person name="Cleveland T.E."/>
            <person name="Fedorova N.D."/>
            <person name="Gotoh O."/>
            <person name="Horikawa H."/>
            <person name="Hosoyama A."/>
            <person name="Ichinomiya M."/>
            <person name="Igarashi R."/>
            <person name="Iwashita K."/>
            <person name="Juvvadi P.R."/>
            <person name="Kato M."/>
            <person name="Kato Y."/>
            <person name="Kin T."/>
            <person name="Kokubun A."/>
            <person name="Maeda H."/>
            <person name="Maeyama N."/>
            <person name="Maruyama J."/>
            <person name="Nagasaki H."/>
            <person name="Nakajima T."/>
            <person name="Oda K."/>
            <person name="Okada K."/>
            <person name="Paulsen I."/>
            <person name="Sakamoto K."/>
            <person name="Sawano T."/>
            <person name="Takahashi M."/>
            <person name="Takase K."/>
            <person name="Terabayashi Y."/>
            <person name="Wortman J.R."/>
            <person name="Yamada O."/>
            <person name="Yamagata Y."/>
            <person name="Anazawa H."/>
            <person name="Hata Y."/>
            <person name="Koide Y."/>
            <person name="Komori T."/>
            <person name="Koyama Y."/>
            <person name="Minetoki T."/>
            <person name="Suharnan S."/>
            <person name="Tanaka A."/>
            <person name="Isono K."/>
            <person name="Kuhara S."/>
            <person name="Ogasawara N."/>
            <person name="Kikuchi H."/>
        </authorList>
    </citation>
    <scope>NUCLEOTIDE SEQUENCE [LARGE SCALE GENOMIC DNA]</scope>
    <source>
        <strain>ATCC 42149 / RIB 40</strain>
    </source>
</reference>
<reference key="2">
    <citation type="journal article" date="2002" name="Fungal Genet. Biol.">
        <title>Visualization of vacuoles in Aspergillus oryzae by expression of CPY-EGFP.</title>
        <authorList>
            <person name="Ohneda M."/>
            <person name="Arioka M."/>
            <person name="Nakajima H."/>
            <person name="Kitamoto K."/>
        </authorList>
    </citation>
    <scope>SUBCELLULAR LOCATION</scope>
</reference>
<reference key="3">
    <citation type="journal article" date="2005" name="Appl. Environ. Microbiol.">
        <title>Isolation and characterization of Aspergillus oryzae vacuolar protein sorting mutants.</title>
        <authorList>
            <person name="Ohneda M."/>
            <person name="Arioka M."/>
            <person name="Kitamoto K."/>
        </authorList>
    </citation>
    <scope>SUBCELLULAR LOCATION</scope>
</reference>
<reference key="4">
    <citation type="journal article" date="2010" name="Appl. Environ. Microbiol.">
        <title>Enhanced production and secretion of heterologous proteins by the filamentous fungus Aspergillus oryzae via disruption of vacuolar protein sorting receptor gene Aovps10.</title>
        <authorList>
            <person name="Yoon J."/>
            <person name="Aishan T."/>
            <person name="Maruyama J."/>
            <person name="Kitamoto K."/>
        </authorList>
    </citation>
    <scope>SUBCELLULAR LOCATION</scope>
</reference>
<accession>Q2TYA1</accession>
<gene>
    <name type="primary">cpyA</name>
    <name type="ORF">AO090103000332</name>
</gene>
<sequence>MRVLPATLLVGAASAAVPPLQQVLGRPEEGMSFSKPLHAFQEQLKTLSEDARKLWDEVANYFPDSMDHSPIFSLPKKHTRRPDSHWDHIVRGSDVQKIWVNNADGEKEREIDGKLEAYDLRIKKADPSALGIDPNVKQYTGYLDDNGNDKHLFYWFFESRNDPKNDPVVLWLNGGPGCSSLTGLFMELGPSSIDENIKPVYNDFSWNSNASVIFLDQPVNVGYSYSGSAVSDTVAAGKDVYALLSLFFKQFPEYAEQDFHIAGESYAGHYIPVFASEILAHKNRNINLKSVLIGNGLTDGLTQYGYYRPMGCGEGGYKAVLDEATCESMDNALPRCRSMIESCYNSESAWVCVPASIYCNNALIGPYQRTGQNVYDVRSKCEDESNLCYKGMGYVSEYLNKAEVREAVGAEVGGYDSCNFDINRNFLFHGDWMKPYHRLVPGLLEQIPVLIYAGDADYICNWLGNKAWTEALEWPGQKEYASAELEDLKIEQNEHTGKKIGQVKSHGNFTFMRLYGGGHMVPMDQPEASLEFFNRWLGGEWF</sequence>
<feature type="signal peptide" evidence="2">
    <location>
        <begin position="1"/>
        <end position="17"/>
    </location>
</feature>
<feature type="propeptide" id="PRO_0000407437" evidence="1">
    <location>
        <begin position="18"/>
        <end position="123"/>
    </location>
</feature>
<feature type="chain" id="PRO_0000407438" description="Carboxypeptidase Y homolog A">
    <location>
        <begin position="124"/>
        <end position="542"/>
    </location>
</feature>
<feature type="active site" evidence="3">
    <location>
        <position position="265"/>
    </location>
</feature>
<feature type="active site" evidence="3">
    <location>
        <position position="457"/>
    </location>
</feature>
<feature type="active site" evidence="3">
    <location>
        <position position="519"/>
    </location>
</feature>
<feature type="glycosylation site" description="N-linked (GlcNAc...) asparagine" evidence="2">
    <location>
        <position position="209"/>
    </location>
</feature>
<feature type="glycosylation site" description="N-linked (GlcNAc...) asparagine" evidence="2">
    <location>
        <position position="508"/>
    </location>
</feature>
<feature type="disulfide bond" evidence="1">
    <location>
        <begin position="178"/>
        <end position="418"/>
    </location>
</feature>
<feature type="disulfide bond" evidence="1">
    <location>
        <begin position="312"/>
        <end position="326"/>
    </location>
</feature>
<feature type="disulfide bond" evidence="1">
    <location>
        <begin position="336"/>
        <end position="359"/>
    </location>
</feature>
<feature type="disulfide bond" evidence="1">
    <location>
        <begin position="343"/>
        <end position="352"/>
    </location>
</feature>
<feature type="disulfide bond" evidence="1">
    <location>
        <begin position="381"/>
        <end position="388"/>
    </location>
</feature>
<comment type="function">
    <text evidence="1">Vacuolar carboxypeptidase involved in degradation of small peptides. Digests preferentially peptides containing an aliphatic or hydrophobic residue in P1' position, as well as methionine, leucine or phenylalanine in P1 position of ester substrate (By similarity).</text>
</comment>
<comment type="catalytic activity">
    <reaction evidence="3">
        <text>Release of a C-terminal amino acid with broad specificity.</text>
        <dbReference type="EC" id="3.4.16.5"/>
    </reaction>
</comment>
<comment type="subcellular location">
    <subcellularLocation>
        <location evidence="4 5 6">Vacuole</location>
    </subcellularLocation>
    <text>Requires vps10 for correct vacuolar localization.</text>
</comment>
<comment type="similarity">
    <text evidence="7">Belongs to the peptidase S10 family.</text>
</comment>
<proteinExistence type="inferred from homology"/>